<evidence type="ECO:0000250" key="1"/>
<evidence type="ECO:0000305" key="2"/>
<keyword id="KW-0240">DNA-directed RNA polymerase</keyword>
<keyword id="KW-0548">Nucleotidyltransferase</keyword>
<keyword id="KW-1185">Reference proteome</keyword>
<keyword id="KW-0804">Transcription</keyword>
<keyword id="KW-0808">Transferase</keyword>
<feature type="chain" id="PRO_0000128936" description="DNA-directed RNA polymerase subunit omega">
    <location>
        <begin position="1"/>
        <end position="91"/>
    </location>
</feature>
<name>RPOZ_ECO57</name>
<gene>
    <name type="primary">rpoZ</name>
    <name type="ordered locus">Z5075</name>
    <name type="ordered locus">ECs4524</name>
</gene>
<dbReference type="EC" id="2.7.7.6"/>
<dbReference type="EMBL" id="AE005174">
    <property type="protein sequence ID" value="AAG58793.1"/>
    <property type="molecule type" value="Genomic_DNA"/>
</dbReference>
<dbReference type="EMBL" id="BA000007">
    <property type="protein sequence ID" value="BAB37947.1"/>
    <property type="molecule type" value="Genomic_DNA"/>
</dbReference>
<dbReference type="PIR" id="D91194">
    <property type="entry name" value="D91194"/>
</dbReference>
<dbReference type="PIR" id="E86041">
    <property type="entry name" value="E86041"/>
</dbReference>
<dbReference type="RefSeq" id="NP_312551.1">
    <property type="nucleotide sequence ID" value="NC_002695.1"/>
</dbReference>
<dbReference type="RefSeq" id="WP_000135058.1">
    <property type="nucleotide sequence ID" value="NZ_VOAI01000021.1"/>
</dbReference>
<dbReference type="EMDB" id="EMD-20203"/>
<dbReference type="EMDB" id="EMD-20460"/>
<dbReference type="EMDB" id="EMD-20461"/>
<dbReference type="EMDB" id="EMD-20462"/>
<dbReference type="EMDB" id="EMD-20463"/>
<dbReference type="EMDB" id="EMD-20464"/>
<dbReference type="EMDB" id="EMD-20465"/>
<dbReference type="EMDB" id="EMD-20466"/>
<dbReference type="EMDB" id="EMD-21474"/>
<dbReference type="EMDB" id="EMD-21475"/>
<dbReference type="EMDB" id="EMD-21476"/>
<dbReference type="EMDB" id="EMD-21477"/>
<dbReference type="EMDB" id="EMD-21482"/>
<dbReference type="EMDB" id="EMD-21485"/>
<dbReference type="EMDB" id="EMD-21853"/>
<dbReference type="EMDB" id="EMD-21996"/>
<dbReference type="EMDB" id="EMD-22006"/>
<dbReference type="EMDB" id="EMD-22012"/>
<dbReference type="EMDB" id="EMD-22039"/>
<dbReference type="EMDB" id="EMD-22043"/>
<dbReference type="EMDB" id="EMD-22044"/>
<dbReference type="EMDB" id="EMD-22045"/>
<dbReference type="EMDB" id="EMD-22082"/>
<dbReference type="EMDB" id="EMD-22084"/>
<dbReference type="EMDB" id="EMD-22087"/>
<dbReference type="EMDB" id="EMD-22107"/>
<dbReference type="EMDB" id="EMD-22141"/>
<dbReference type="EMDB" id="EMD-22142"/>
<dbReference type="EMDB" id="EMD-22181"/>
<dbReference type="EMDB" id="EMD-22192"/>
<dbReference type="EMDB" id="EMD-23716"/>
<dbReference type="EMDB" id="EMD-23892"/>
<dbReference type="EMDB" id="EMD-23893"/>
<dbReference type="EMDB" id="EMD-23895"/>
<dbReference type="EMDB" id="EMD-23897"/>
<dbReference type="EMDB" id="EMD-24148"/>
<dbReference type="EMDB" id="EMD-26438"/>
<dbReference type="EMDB" id="EMD-26439"/>
<dbReference type="EMDB" id="EMD-26830"/>
<dbReference type="EMDB" id="EMD-26832"/>
<dbReference type="EMDB" id="EMD-27864"/>
<dbReference type="EMDB" id="EMD-27913"/>
<dbReference type="EMDB" id="EMD-27916"/>
<dbReference type="EMDB" id="EMD-27930"/>
<dbReference type="EMDB" id="EMD-27931"/>
<dbReference type="EMDB" id="EMD-28109"/>
<dbReference type="EMDB" id="EMD-28110"/>
<dbReference type="EMDB" id="EMD-28113"/>
<dbReference type="EMDB" id="EMD-28143"/>
<dbReference type="EMDB" id="EMD-28144"/>
<dbReference type="EMDB" id="EMD-28145"/>
<dbReference type="EMDB" id="EMD-28146"/>
<dbReference type="EMDB" id="EMD-28148"/>
<dbReference type="EMDB" id="EMD-40864"/>
<dbReference type="SMR" id="P0A802"/>
<dbReference type="STRING" id="155864.Z5075"/>
<dbReference type="GeneID" id="915520"/>
<dbReference type="GeneID" id="98390719"/>
<dbReference type="KEGG" id="ece:Z5075"/>
<dbReference type="KEGG" id="ecs:ECs_4524"/>
<dbReference type="PATRIC" id="fig|386585.9.peg.4742"/>
<dbReference type="eggNOG" id="COG1758">
    <property type="taxonomic scope" value="Bacteria"/>
</dbReference>
<dbReference type="HOGENOM" id="CLU_125406_5_3_6"/>
<dbReference type="OMA" id="NVDNRFQ"/>
<dbReference type="EvolutionaryTrace" id="P0A802"/>
<dbReference type="Proteomes" id="UP000000558">
    <property type="component" value="Chromosome"/>
</dbReference>
<dbReference type="Proteomes" id="UP000002519">
    <property type="component" value="Chromosome"/>
</dbReference>
<dbReference type="GO" id="GO:0000428">
    <property type="term" value="C:DNA-directed RNA polymerase complex"/>
    <property type="evidence" value="ECO:0007669"/>
    <property type="project" value="UniProtKB-KW"/>
</dbReference>
<dbReference type="GO" id="GO:0003677">
    <property type="term" value="F:DNA binding"/>
    <property type="evidence" value="ECO:0007669"/>
    <property type="project" value="UniProtKB-UniRule"/>
</dbReference>
<dbReference type="GO" id="GO:0003899">
    <property type="term" value="F:DNA-directed RNA polymerase activity"/>
    <property type="evidence" value="ECO:0007669"/>
    <property type="project" value="UniProtKB-UniRule"/>
</dbReference>
<dbReference type="GO" id="GO:0006351">
    <property type="term" value="P:DNA-templated transcription"/>
    <property type="evidence" value="ECO:0007669"/>
    <property type="project" value="UniProtKB-UniRule"/>
</dbReference>
<dbReference type="FunFam" id="3.90.940.10:FF:000001">
    <property type="entry name" value="DNA-directed RNA polymerase subunit omega"/>
    <property type="match status" value="1"/>
</dbReference>
<dbReference type="Gene3D" id="3.90.940.10">
    <property type="match status" value="1"/>
</dbReference>
<dbReference type="HAMAP" id="MF_00366">
    <property type="entry name" value="RNApol_bact_RpoZ"/>
    <property type="match status" value="1"/>
</dbReference>
<dbReference type="InterPro" id="IPR003716">
    <property type="entry name" value="DNA-dir_RNA_pol_omega"/>
</dbReference>
<dbReference type="InterPro" id="IPR006110">
    <property type="entry name" value="Pol_omega/Rpo6/RPB6"/>
</dbReference>
<dbReference type="InterPro" id="IPR036161">
    <property type="entry name" value="RPB6/omega-like_sf"/>
</dbReference>
<dbReference type="NCBIfam" id="TIGR00690">
    <property type="entry name" value="rpoZ"/>
    <property type="match status" value="1"/>
</dbReference>
<dbReference type="PANTHER" id="PTHR34476">
    <property type="entry name" value="DNA-DIRECTED RNA POLYMERASE SUBUNIT OMEGA"/>
    <property type="match status" value="1"/>
</dbReference>
<dbReference type="PANTHER" id="PTHR34476:SF1">
    <property type="entry name" value="DNA-DIRECTED RNA POLYMERASE SUBUNIT OMEGA"/>
    <property type="match status" value="1"/>
</dbReference>
<dbReference type="Pfam" id="PF01192">
    <property type="entry name" value="RNA_pol_Rpb6"/>
    <property type="match status" value="1"/>
</dbReference>
<dbReference type="SMART" id="SM01409">
    <property type="entry name" value="RNA_pol_Rpb6"/>
    <property type="match status" value="1"/>
</dbReference>
<dbReference type="SUPFAM" id="SSF63562">
    <property type="entry name" value="RPB6/omega subunit-like"/>
    <property type="match status" value="1"/>
</dbReference>
<proteinExistence type="inferred from homology"/>
<organism>
    <name type="scientific">Escherichia coli O157:H7</name>
    <dbReference type="NCBI Taxonomy" id="83334"/>
    <lineage>
        <taxon>Bacteria</taxon>
        <taxon>Pseudomonadati</taxon>
        <taxon>Pseudomonadota</taxon>
        <taxon>Gammaproteobacteria</taxon>
        <taxon>Enterobacterales</taxon>
        <taxon>Enterobacteriaceae</taxon>
        <taxon>Escherichia</taxon>
    </lineage>
</organism>
<sequence length="91" mass="10237">MARVTVQDAVEKIGNRFDLVLVAARRARQMQVGGKDPLVPEENDKTTVIALREIEEGLINNQILDVRERQEQQEQEAAELQAVTAIAEGRR</sequence>
<reference key="1">
    <citation type="journal article" date="2001" name="Nature">
        <title>Genome sequence of enterohaemorrhagic Escherichia coli O157:H7.</title>
        <authorList>
            <person name="Perna N.T."/>
            <person name="Plunkett G. III"/>
            <person name="Burland V."/>
            <person name="Mau B."/>
            <person name="Glasner J.D."/>
            <person name="Rose D.J."/>
            <person name="Mayhew G.F."/>
            <person name="Evans P.S."/>
            <person name="Gregor J."/>
            <person name="Kirkpatrick H.A."/>
            <person name="Posfai G."/>
            <person name="Hackett J."/>
            <person name="Klink S."/>
            <person name="Boutin A."/>
            <person name="Shao Y."/>
            <person name="Miller L."/>
            <person name="Grotbeck E.J."/>
            <person name="Davis N.W."/>
            <person name="Lim A."/>
            <person name="Dimalanta E.T."/>
            <person name="Potamousis K."/>
            <person name="Apodaca J."/>
            <person name="Anantharaman T.S."/>
            <person name="Lin J."/>
            <person name="Yen G."/>
            <person name="Schwartz D.C."/>
            <person name="Welch R.A."/>
            <person name="Blattner F.R."/>
        </authorList>
    </citation>
    <scope>NUCLEOTIDE SEQUENCE [LARGE SCALE GENOMIC DNA]</scope>
    <source>
        <strain>O157:H7 / EDL933 / ATCC 700927 / EHEC</strain>
    </source>
</reference>
<reference key="2">
    <citation type="journal article" date="2001" name="DNA Res.">
        <title>Complete genome sequence of enterohemorrhagic Escherichia coli O157:H7 and genomic comparison with a laboratory strain K-12.</title>
        <authorList>
            <person name="Hayashi T."/>
            <person name="Makino K."/>
            <person name="Ohnishi M."/>
            <person name="Kurokawa K."/>
            <person name="Ishii K."/>
            <person name="Yokoyama K."/>
            <person name="Han C.-G."/>
            <person name="Ohtsubo E."/>
            <person name="Nakayama K."/>
            <person name="Murata T."/>
            <person name="Tanaka M."/>
            <person name="Tobe T."/>
            <person name="Iida T."/>
            <person name="Takami H."/>
            <person name="Honda T."/>
            <person name="Sasakawa C."/>
            <person name="Ogasawara N."/>
            <person name="Yasunaga T."/>
            <person name="Kuhara S."/>
            <person name="Shiba T."/>
            <person name="Hattori M."/>
            <person name="Shinagawa H."/>
        </authorList>
    </citation>
    <scope>NUCLEOTIDE SEQUENCE [LARGE SCALE GENOMIC DNA]</scope>
    <source>
        <strain>O157:H7 / Sakai / RIMD 0509952 / EHEC</strain>
    </source>
</reference>
<protein>
    <recommendedName>
        <fullName>DNA-directed RNA polymerase subunit omega</fullName>
        <shortName>RNAP omega subunit</shortName>
        <ecNumber>2.7.7.6</ecNumber>
    </recommendedName>
    <alternativeName>
        <fullName>RNA polymerase omega subunit</fullName>
    </alternativeName>
    <alternativeName>
        <fullName>Transcriptase subunit omega</fullName>
    </alternativeName>
</protein>
<accession>P0A802</accession>
<accession>P08374</accession>
<comment type="function">
    <text evidence="1">Promotes RNA polymerase assembly. Latches the N- and C-terminal regions of the beta' subunit thereby facilitating its interaction with the beta and alpha subunits (By similarity).</text>
</comment>
<comment type="catalytic activity">
    <reaction>
        <text>RNA(n) + a ribonucleoside 5'-triphosphate = RNA(n+1) + diphosphate</text>
        <dbReference type="Rhea" id="RHEA:21248"/>
        <dbReference type="Rhea" id="RHEA-COMP:14527"/>
        <dbReference type="Rhea" id="RHEA-COMP:17342"/>
        <dbReference type="ChEBI" id="CHEBI:33019"/>
        <dbReference type="ChEBI" id="CHEBI:61557"/>
        <dbReference type="ChEBI" id="CHEBI:140395"/>
        <dbReference type="EC" id="2.7.7.6"/>
    </reaction>
</comment>
<comment type="subunit">
    <text evidence="1">The RNAP catalytic core consists of 2 alpha, 1 beta, 1 beta' and 1 omega subunit. When a sigma factor is associated with the core the holoenzyme is formed, which can initiate transcription (By similarity).</text>
</comment>
<comment type="similarity">
    <text evidence="2">Belongs to the RNA polymerase subunit omega family.</text>
</comment>